<evidence type="ECO:0000255" key="1">
    <source>
        <dbReference type="HAMAP-Rule" id="MF_00534"/>
    </source>
</evidence>
<feature type="chain" id="PRO_0000176435" description="Asparagine--tRNA ligase">
    <location>
        <begin position="1"/>
        <end position="430"/>
    </location>
</feature>
<keyword id="KW-0030">Aminoacyl-tRNA synthetase</keyword>
<keyword id="KW-0067">ATP-binding</keyword>
<keyword id="KW-0963">Cytoplasm</keyword>
<keyword id="KW-0436">Ligase</keyword>
<keyword id="KW-0547">Nucleotide-binding</keyword>
<keyword id="KW-0648">Protein biosynthesis</keyword>
<keyword id="KW-1185">Reference proteome</keyword>
<reference key="1">
    <citation type="journal article" date="2002" name="Nucleic Acids Res.">
        <title>Genome sequence of Oceanobacillus iheyensis isolated from the Iheya Ridge and its unexpected adaptive capabilities to extreme environments.</title>
        <authorList>
            <person name="Takami H."/>
            <person name="Takaki Y."/>
            <person name="Uchiyama I."/>
        </authorList>
    </citation>
    <scope>NUCLEOTIDE SEQUENCE [LARGE SCALE GENOMIC DNA]</scope>
    <source>
        <strain>DSM 14371 / CIP 107618 / JCM 11309 / KCTC 3954 / HTE831</strain>
    </source>
</reference>
<sequence length="430" mass="49286">MKITIAQAPQYIEQEVTIGAWLSNKRSSGKIAFLQLRDGTGFMQGIVVKSDVSEDVFSTSKNITQESSLYVTGKIVEDTRSDFGYEMQVSNVEVIHEANDYPITPKEHGTEFLMDHRHLWLRSKKQHAVMKIRNEIIRSTYEYFNKEGFVKVDPPILTGSSAEGTTELFHTKYFDEEAYLSQSGQLYMEAAAMALGKVFSFGPTFRAEKSKTRRHLIEFWMIEPEMAFVEHEESLQIQENYVSHIVQSVLTNCKLELSVLDRDLSKLEKIKAPFPRISYDEAIDMLKEKGFDDIEWGEDFGAPHETAIAESYDMPVFITNYPKDIKAFYMKPHPDRSDVVLCADLIAPEGYGEIIGGSQRIDDLELMEQRYEEHGLTGPAYQWYLELRKYGSVPHSGFGLGLERTVAWLSGVEHVRETIPFPRLLNRLYP</sequence>
<protein>
    <recommendedName>
        <fullName evidence="1">Asparagine--tRNA ligase</fullName>
        <ecNumber evidence="1">6.1.1.22</ecNumber>
    </recommendedName>
    <alternativeName>
        <fullName evidence="1">Asparaginyl-tRNA synthetase</fullName>
        <shortName evidence="1">AsnRS</shortName>
    </alternativeName>
</protein>
<dbReference type="EC" id="6.1.1.22" evidence="1"/>
<dbReference type="EMBL" id="BA000028">
    <property type="protein sequence ID" value="BAC13715.1"/>
    <property type="molecule type" value="Genomic_DNA"/>
</dbReference>
<dbReference type="RefSeq" id="WP_011066158.1">
    <property type="nucleotide sequence ID" value="NC_004193.1"/>
</dbReference>
<dbReference type="SMR" id="Q8EQE2"/>
<dbReference type="STRING" id="221109.gene:10733999"/>
<dbReference type="KEGG" id="oih:OB1759"/>
<dbReference type="eggNOG" id="COG0017">
    <property type="taxonomic scope" value="Bacteria"/>
</dbReference>
<dbReference type="HOGENOM" id="CLU_004553_2_0_9"/>
<dbReference type="OrthoDB" id="9762036at2"/>
<dbReference type="PhylomeDB" id="Q8EQE2"/>
<dbReference type="Proteomes" id="UP000000822">
    <property type="component" value="Chromosome"/>
</dbReference>
<dbReference type="GO" id="GO:0005737">
    <property type="term" value="C:cytoplasm"/>
    <property type="evidence" value="ECO:0007669"/>
    <property type="project" value="UniProtKB-SubCell"/>
</dbReference>
<dbReference type="GO" id="GO:0004816">
    <property type="term" value="F:asparagine-tRNA ligase activity"/>
    <property type="evidence" value="ECO:0007669"/>
    <property type="project" value="UniProtKB-UniRule"/>
</dbReference>
<dbReference type="GO" id="GO:0005524">
    <property type="term" value="F:ATP binding"/>
    <property type="evidence" value="ECO:0007669"/>
    <property type="project" value="UniProtKB-UniRule"/>
</dbReference>
<dbReference type="GO" id="GO:0140096">
    <property type="term" value="F:catalytic activity, acting on a protein"/>
    <property type="evidence" value="ECO:0007669"/>
    <property type="project" value="UniProtKB-ARBA"/>
</dbReference>
<dbReference type="GO" id="GO:0003676">
    <property type="term" value="F:nucleic acid binding"/>
    <property type="evidence" value="ECO:0007669"/>
    <property type="project" value="InterPro"/>
</dbReference>
<dbReference type="GO" id="GO:0016740">
    <property type="term" value="F:transferase activity"/>
    <property type="evidence" value="ECO:0007669"/>
    <property type="project" value="UniProtKB-ARBA"/>
</dbReference>
<dbReference type="GO" id="GO:0006421">
    <property type="term" value="P:asparaginyl-tRNA aminoacylation"/>
    <property type="evidence" value="ECO:0007669"/>
    <property type="project" value="UniProtKB-UniRule"/>
</dbReference>
<dbReference type="CDD" id="cd04323">
    <property type="entry name" value="AsnRS_cyto_like_N"/>
    <property type="match status" value="1"/>
</dbReference>
<dbReference type="CDD" id="cd00776">
    <property type="entry name" value="AsxRS_core"/>
    <property type="match status" value="1"/>
</dbReference>
<dbReference type="Gene3D" id="3.30.930.10">
    <property type="entry name" value="Bira Bifunctional Protein, Domain 2"/>
    <property type="match status" value="1"/>
</dbReference>
<dbReference type="Gene3D" id="2.40.50.140">
    <property type="entry name" value="Nucleic acid-binding proteins"/>
    <property type="match status" value="1"/>
</dbReference>
<dbReference type="HAMAP" id="MF_00534">
    <property type="entry name" value="Asn_tRNA_synth"/>
    <property type="match status" value="1"/>
</dbReference>
<dbReference type="InterPro" id="IPR004364">
    <property type="entry name" value="Aa-tRNA-synt_II"/>
</dbReference>
<dbReference type="InterPro" id="IPR006195">
    <property type="entry name" value="aa-tRNA-synth_II"/>
</dbReference>
<dbReference type="InterPro" id="IPR045864">
    <property type="entry name" value="aa-tRNA-synth_II/BPL/LPL"/>
</dbReference>
<dbReference type="InterPro" id="IPR004522">
    <property type="entry name" value="Asn-tRNA-ligase"/>
</dbReference>
<dbReference type="InterPro" id="IPR002312">
    <property type="entry name" value="Asp/Asn-tRNA-synth_IIb"/>
</dbReference>
<dbReference type="InterPro" id="IPR012340">
    <property type="entry name" value="NA-bd_OB-fold"/>
</dbReference>
<dbReference type="InterPro" id="IPR004365">
    <property type="entry name" value="NA-bd_OB_tRNA"/>
</dbReference>
<dbReference type="NCBIfam" id="TIGR00457">
    <property type="entry name" value="asnS"/>
    <property type="match status" value="1"/>
</dbReference>
<dbReference type="NCBIfam" id="NF003037">
    <property type="entry name" value="PRK03932.1"/>
    <property type="match status" value="1"/>
</dbReference>
<dbReference type="NCBIfam" id="NF003483">
    <property type="entry name" value="PRK05159.1"/>
    <property type="match status" value="1"/>
</dbReference>
<dbReference type="PANTHER" id="PTHR22594:SF34">
    <property type="entry name" value="ASPARAGINE--TRNA LIGASE, MITOCHONDRIAL-RELATED"/>
    <property type="match status" value="1"/>
</dbReference>
<dbReference type="PANTHER" id="PTHR22594">
    <property type="entry name" value="ASPARTYL/LYSYL-TRNA SYNTHETASE"/>
    <property type="match status" value="1"/>
</dbReference>
<dbReference type="Pfam" id="PF00152">
    <property type="entry name" value="tRNA-synt_2"/>
    <property type="match status" value="1"/>
</dbReference>
<dbReference type="Pfam" id="PF01336">
    <property type="entry name" value="tRNA_anti-codon"/>
    <property type="match status" value="1"/>
</dbReference>
<dbReference type="PRINTS" id="PR01042">
    <property type="entry name" value="TRNASYNTHASP"/>
</dbReference>
<dbReference type="SUPFAM" id="SSF55681">
    <property type="entry name" value="Class II aaRS and biotin synthetases"/>
    <property type="match status" value="1"/>
</dbReference>
<dbReference type="SUPFAM" id="SSF50249">
    <property type="entry name" value="Nucleic acid-binding proteins"/>
    <property type="match status" value="1"/>
</dbReference>
<dbReference type="PROSITE" id="PS50862">
    <property type="entry name" value="AA_TRNA_LIGASE_II"/>
    <property type="match status" value="1"/>
</dbReference>
<proteinExistence type="inferred from homology"/>
<organism>
    <name type="scientific">Oceanobacillus iheyensis (strain DSM 14371 / CIP 107618 / JCM 11309 / KCTC 3954 / HTE831)</name>
    <dbReference type="NCBI Taxonomy" id="221109"/>
    <lineage>
        <taxon>Bacteria</taxon>
        <taxon>Bacillati</taxon>
        <taxon>Bacillota</taxon>
        <taxon>Bacilli</taxon>
        <taxon>Bacillales</taxon>
        <taxon>Bacillaceae</taxon>
        <taxon>Oceanobacillus</taxon>
    </lineage>
</organism>
<accession>Q8EQE2</accession>
<name>SYN_OCEIH</name>
<gene>
    <name evidence="1" type="primary">asnS</name>
    <name type="ordered locus">OB1759</name>
</gene>
<comment type="catalytic activity">
    <reaction evidence="1">
        <text>tRNA(Asn) + L-asparagine + ATP = L-asparaginyl-tRNA(Asn) + AMP + diphosphate + H(+)</text>
        <dbReference type="Rhea" id="RHEA:11180"/>
        <dbReference type="Rhea" id="RHEA-COMP:9659"/>
        <dbReference type="Rhea" id="RHEA-COMP:9674"/>
        <dbReference type="ChEBI" id="CHEBI:15378"/>
        <dbReference type="ChEBI" id="CHEBI:30616"/>
        <dbReference type="ChEBI" id="CHEBI:33019"/>
        <dbReference type="ChEBI" id="CHEBI:58048"/>
        <dbReference type="ChEBI" id="CHEBI:78442"/>
        <dbReference type="ChEBI" id="CHEBI:78515"/>
        <dbReference type="ChEBI" id="CHEBI:456215"/>
        <dbReference type="EC" id="6.1.1.22"/>
    </reaction>
</comment>
<comment type="subunit">
    <text evidence="1">Homodimer.</text>
</comment>
<comment type="subcellular location">
    <subcellularLocation>
        <location evidence="1">Cytoplasm</location>
    </subcellularLocation>
</comment>
<comment type="similarity">
    <text evidence="1">Belongs to the class-II aminoacyl-tRNA synthetase family.</text>
</comment>